<comment type="function">
    <text evidence="1">This protein binds to the 23S rRNA, and is important in its secondary structure. It is located near the subunit interface in the base of the L7/L12 stalk, and near the tRNA binding site of the peptidyltransferase center.</text>
</comment>
<comment type="subunit">
    <text evidence="1">Part of the 50S ribosomal subunit.</text>
</comment>
<comment type="similarity">
    <text evidence="1">Belongs to the universal ribosomal protein uL6 family.</text>
</comment>
<gene>
    <name evidence="1" type="primary">rplF</name>
    <name type="ordered locus">Avi_1856</name>
</gene>
<reference key="1">
    <citation type="journal article" date="2009" name="J. Bacteriol.">
        <title>Genome sequences of three Agrobacterium biovars help elucidate the evolution of multichromosome genomes in bacteria.</title>
        <authorList>
            <person name="Slater S.C."/>
            <person name="Goldman B.S."/>
            <person name="Goodner B."/>
            <person name="Setubal J.C."/>
            <person name="Farrand S.K."/>
            <person name="Nester E.W."/>
            <person name="Burr T.J."/>
            <person name="Banta L."/>
            <person name="Dickerman A.W."/>
            <person name="Paulsen I."/>
            <person name="Otten L."/>
            <person name="Suen G."/>
            <person name="Welch R."/>
            <person name="Almeida N.F."/>
            <person name="Arnold F."/>
            <person name="Burton O.T."/>
            <person name="Du Z."/>
            <person name="Ewing A."/>
            <person name="Godsy E."/>
            <person name="Heisel S."/>
            <person name="Houmiel K.L."/>
            <person name="Jhaveri J."/>
            <person name="Lu J."/>
            <person name="Miller N.M."/>
            <person name="Norton S."/>
            <person name="Chen Q."/>
            <person name="Phoolcharoen W."/>
            <person name="Ohlin V."/>
            <person name="Ondrusek D."/>
            <person name="Pride N."/>
            <person name="Stricklin S.L."/>
            <person name="Sun J."/>
            <person name="Wheeler C."/>
            <person name="Wilson L."/>
            <person name="Zhu H."/>
            <person name="Wood D.W."/>
        </authorList>
    </citation>
    <scope>NUCLEOTIDE SEQUENCE [LARGE SCALE GENOMIC DNA]</scope>
    <source>
        <strain>ATCC BAA-846 / DSM 112012 / S4</strain>
    </source>
</reference>
<dbReference type="EMBL" id="CP000633">
    <property type="protein sequence ID" value="ACM36332.1"/>
    <property type="molecule type" value="Genomic_DNA"/>
</dbReference>
<dbReference type="RefSeq" id="WP_015915753.1">
    <property type="nucleotide sequence ID" value="NC_011989.1"/>
</dbReference>
<dbReference type="SMR" id="B9JVQ2"/>
<dbReference type="STRING" id="311402.Avi_1856"/>
<dbReference type="GeneID" id="60682418"/>
<dbReference type="KEGG" id="avi:Avi_1856"/>
<dbReference type="eggNOG" id="COG0097">
    <property type="taxonomic scope" value="Bacteria"/>
</dbReference>
<dbReference type="HOGENOM" id="CLU_065464_1_2_5"/>
<dbReference type="Proteomes" id="UP000001596">
    <property type="component" value="Chromosome 1"/>
</dbReference>
<dbReference type="GO" id="GO:0022625">
    <property type="term" value="C:cytosolic large ribosomal subunit"/>
    <property type="evidence" value="ECO:0007669"/>
    <property type="project" value="TreeGrafter"/>
</dbReference>
<dbReference type="GO" id="GO:0019843">
    <property type="term" value="F:rRNA binding"/>
    <property type="evidence" value="ECO:0007669"/>
    <property type="project" value="UniProtKB-UniRule"/>
</dbReference>
<dbReference type="GO" id="GO:0003735">
    <property type="term" value="F:structural constituent of ribosome"/>
    <property type="evidence" value="ECO:0007669"/>
    <property type="project" value="InterPro"/>
</dbReference>
<dbReference type="GO" id="GO:0002181">
    <property type="term" value="P:cytoplasmic translation"/>
    <property type="evidence" value="ECO:0007669"/>
    <property type="project" value="TreeGrafter"/>
</dbReference>
<dbReference type="FunFam" id="3.90.930.12:FF:000001">
    <property type="entry name" value="50S ribosomal protein L6"/>
    <property type="match status" value="1"/>
</dbReference>
<dbReference type="Gene3D" id="3.90.930.12">
    <property type="entry name" value="Ribosomal protein L6, alpha-beta domain"/>
    <property type="match status" value="2"/>
</dbReference>
<dbReference type="HAMAP" id="MF_01365_B">
    <property type="entry name" value="Ribosomal_uL6_B"/>
    <property type="match status" value="1"/>
</dbReference>
<dbReference type="InterPro" id="IPR000702">
    <property type="entry name" value="Ribosomal_uL6-like"/>
</dbReference>
<dbReference type="InterPro" id="IPR036789">
    <property type="entry name" value="Ribosomal_uL6-like_a/b-dom_sf"/>
</dbReference>
<dbReference type="InterPro" id="IPR020040">
    <property type="entry name" value="Ribosomal_uL6_a/b-dom"/>
</dbReference>
<dbReference type="InterPro" id="IPR019906">
    <property type="entry name" value="Ribosomal_uL6_bac-type"/>
</dbReference>
<dbReference type="InterPro" id="IPR002358">
    <property type="entry name" value="Ribosomal_uL6_CS"/>
</dbReference>
<dbReference type="NCBIfam" id="TIGR03654">
    <property type="entry name" value="L6_bact"/>
    <property type="match status" value="1"/>
</dbReference>
<dbReference type="PANTHER" id="PTHR11655">
    <property type="entry name" value="60S/50S RIBOSOMAL PROTEIN L6/L9"/>
    <property type="match status" value="1"/>
</dbReference>
<dbReference type="PANTHER" id="PTHR11655:SF14">
    <property type="entry name" value="LARGE RIBOSOMAL SUBUNIT PROTEIN UL6M"/>
    <property type="match status" value="1"/>
</dbReference>
<dbReference type="Pfam" id="PF00347">
    <property type="entry name" value="Ribosomal_L6"/>
    <property type="match status" value="2"/>
</dbReference>
<dbReference type="PIRSF" id="PIRSF002162">
    <property type="entry name" value="Ribosomal_L6"/>
    <property type="match status" value="1"/>
</dbReference>
<dbReference type="PRINTS" id="PR00059">
    <property type="entry name" value="RIBOSOMALL6"/>
</dbReference>
<dbReference type="SUPFAM" id="SSF56053">
    <property type="entry name" value="Ribosomal protein L6"/>
    <property type="match status" value="2"/>
</dbReference>
<dbReference type="PROSITE" id="PS00525">
    <property type="entry name" value="RIBOSOMAL_L6_1"/>
    <property type="match status" value="1"/>
</dbReference>
<accession>B9JVQ2</accession>
<protein>
    <recommendedName>
        <fullName evidence="1">Large ribosomal subunit protein uL6</fullName>
    </recommendedName>
    <alternativeName>
        <fullName evidence="2">50S ribosomal protein L6</fullName>
    </alternativeName>
</protein>
<proteinExistence type="inferred from homology"/>
<feature type="chain" id="PRO_1000166786" description="Large ribosomal subunit protein uL6">
    <location>
        <begin position="1"/>
        <end position="177"/>
    </location>
</feature>
<organism>
    <name type="scientific">Allorhizobium ampelinum (strain ATCC BAA-846 / DSM 112012 / S4)</name>
    <name type="common">Agrobacterium vitis (strain S4)</name>
    <dbReference type="NCBI Taxonomy" id="311402"/>
    <lineage>
        <taxon>Bacteria</taxon>
        <taxon>Pseudomonadati</taxon>
        <taxon>Pseudomonadota</taxon>
        <taxon>Alphaproteobacteria</taxon>
        <taxon>Hyphomicrobiales</taxon>
        <taxon>Rhizobiaceae</taxon>
        <taxon>Rhizobium/Agrobacterium group</taxon>
        <taxon>Allorhizobium</taxon>
        <taxon>Allorhizobium ampelinum</taxon>
    </lineage>
</organism>
<evidence type="ECO:0000255" key="1">
    <source>
        <dbReference type="HAMAP-Rule" id="MF_01365"/>
    </source>
</evidence>
<evidence type="ECO:0000305" key="2"/>
<name>RL6_ALLAM</name>
<keyword id="KW-1185">Reference proteome</keyword>
<keyword id="KW-0687">Ribonucleoprotein</keyword>
<keyword id="KW-0689">Ribosomal protein</keyword>
<keyword id="KW-0694">RNA-binding</keyword>
<keyword id="KW-0699">rRNA-binding</keyword>
<sequence>MSRIGKKPVQVPAGITASVDGQKVTAKGPKGELFFVANDEISVALEDNAIVVKPVNDSKDARSKWGMSRTMIENILKGVKDGYERKLEINGVGYRASLQGKNLQLALGFSHDVVYEPPQGITIAVPKPTEIVVSGINKQQVGQVAAEIREYRGPEPYKGKGVKYAEERIVRKEGKKK</sequence>